<proteinExistence type="evidence at protein level"/>
<comment type="function">
    <text evidence="2 4 5">Developmental protein involved in oogenesis (PubMed:16616913). Required for germline maintenance, stability of mitotic spindles, localization of patterning determinants, oocyte growth and fusome biogenesis in males and females (PubMed:16616913). Also required for dorso-ventral and antero-posterior patterning of oocyte and eggshell (PubMed:16616913). May be involved in microtubule function during oogenesis (PubMed:16616913). Part of a rhi-dependent transcription machinery that enables the generation of piRNA precursors from heterochromatin while maintaining the suppression of transposon-encoded promoters and enhancers (PubMed:28847004). Component of the RDC complex (rhi, del and cuff) which binds to repressive H3K9me3 marks in the piRNA clusters (PubMed:28847004). RDC promotes the bidirectional transcription of piRNA clusters at these sites by interacting with Moonshiner which forms a complex with the transcription initiation factors TfIIA-S and Trf2 (PubMed:28847004). This mechanism allows transcription to occur in piRNA clusters despite the lack of proper promoter elements and in the presence of the repressive H3K9me3 mark (PubMed:28847004). As part of the RDC complex, involved in suppression of splicing (PubMed:27292797).</text>
</comment>
<comment type="subunit">
    <text evidence="3 6">Component of the Rhino-Deadlock-Cutoff (RDC) complex, composed of rhi/rhino, del/deadlock and cuff/cutoff (PubMed:24906153). Interacts (via N-terminus) with rhi/rhino (via C-terminus); this interaction is direct (PubMed:24906153, PubMed:29858487). Interacts (via C-terminus) with cuff/cutoff; this interaction is direct (PubMed:24906153).</text>
</comment>
<comment type="interaction">
    <interactant intactId="EBI-151790">
        <id>Q9VIF5</id>
    </interactant>
    <interactant intactId="EBI-185996">
        <id>Q9V629</id>
        <label>cuff</label>
    </interactant>
    <organismsDiffer>false</organismsDiffer>
    <experiments>4</experiments>
</comment>
<comment type="interaction">
    <interactant intactId="EBI-151790">
        <id>Q9VIF5</id>
    </interactant>
    <interactant intactId="EBI-149916">
        <id>Q7JXA8</id>
        <label>rhi</label>
    </interactant>
    <organismsDiffer>false</organismsDiffer>
    <experiments>5</experiments>
</comment>
<comment type="subcellular location">
    <subcellularLocation>
        <location evidence="2 5">Nucleus</location>
    </subcellularLocation>
    <subcellularLocation>
        <location evidence="2">Cytoplasm</location>
        <location evidence="2">Cytoskeleton</location>
        <location evidence="2">Microtubule organizing center</location>
        <location evidence="2">Centrosome</location>
    </subcellularLocation>
    <subcellularLocation>
        <location evidence="3">Chromosome</location>
    </subcellularLocation>
    <text evidence="2 3 5">Colocalizes with the oocyte nucleus at midstages of oogenesis and with the centrosomes of early embryos (PubMed:16616913). Expressed in nuclear foci (PubMed:28847004). All components of the Rhino-Deadlock-Cutoff (RDC) Complex associate with these nuclear foci and are required for their formation.</text>
</comment>
<comment type="sequence caution" evidence="7">
    <conflict type="erroneous initiation">
        <sequence resource="EMBL-CDS" id="AAO39437"/>
    </conflict>
</comment>
<reference key="1">
    <citation type="journal article" date="2000" name="Science">
        <title>The genome sequence of Drosophila melanogaster.</title>
        <authorList>
            <person name="Adams M.D."/>
            <person name="Celniker S.E."/>
            <person name="Holt R.A."/>
            <person name="Evans C.A."/>
            <person name="Gocayne J.D."/>
            <person name="Amanatides P.G."/>
            <person name="Scherer S.E."/>
            <person name="Li P.W."/>
            <person name="Hoskins R.A."/>
            <person name="Galle R.F."/>
            <person name="George R.A."/>
            <person name="Lewis S.E."/>
            <person name="Richards S."/>
            <person name="Ashburner M."/>
            <person name="Henderson S.N."/>
            <person name="Sutton G.G."/>
            <person name="Wortman J.R."/>
            <person name="Yandell M.D."/>
            <person name="Zhang Q."/>
            <person name="Chen L.X."/>
            <person name="Brandon R.C."/>
            <person name="Rogers Y.-H.C."/>
            <person name="Blazej R.G."/>
            <person name="Champe M."/>
            <person name="Pfeiffer B.D."/>
            <person name="Wan K.H."/>
            <person name="Doyle C."/>
            <person name="Baxter E.G."/>
            <person name="Helt G."/>
            <person name="Nelson C.R."/>
            <person name="Miklos G.L.G."/>
            <person name="Abril J.F."/>
            <person name="Agbayani A."/>
            <person name="An H.-J."/>
            <person name="Andrews-Pfannkoch C."/>
            <person name="Baldwin D."/>
            <person name="Ballew R.M."/>
            <person name="Basu A."/>
            <person name="Baxendale J."/>
            <person name="Bayraktaroglu L."/>
            <person name="Beasley E.M."/>
            <person name="Beeson K.Y."/>
            <person name="Benos P.V."/>
            <person name="Berman B.P."/>
            <person name="Bhandari D."/>
            <person name="Bolshakov S."/>
            <person name="Borkova D."/>
            <person name="Botchan M.R."/>
            <person name="Bouck J."/>
            <person name="Brokstein P."/>
            <person name="Brottier P."/>
            <person name="Burtis K.C."/>
            <person name="Busam D.A."/>
            <person name="Butler H."/>
            <person name="Cadieu E."/>
            <person name="Center A."/>
            <person name="Chandra I."/>
            <person name="Cherry J.M."/>
            <person name="Cawley S."/>
            <person name="Dahlke C."/>
            <person name="Davenport L.B."/>
            <person name="Davies P."/>
            <person name="de Pablos B."/>
            <person name="Delcher A."/>
            <person name="Deng Z."/>
            <person name="Mays A.D."/>
            <person name="Dew I."/>
            <person name="Dietz S.M."/>
            <person name="Dodson K."/>
            <person name="Doup L.E."/>
            <person name="Downes M."/>
            <person name="Dugan-Rocha S."/>
            <person name="Dunkov B.C."/>
            <person name="Dunn P."/>
            <person name="Durbin K.J."/>
            <person name="Evangelista C.C."/>
            <person name="Ferraz C."/>
            <person name="Ferriera S."/>
            <person name="Fleischmann W."/>
            <person name="Fosler C."/>
            <person name="Gabrielian A.E."/>
            <person name="Garg N.S."/>
            <person name="Gelbart W.M."/>
            <person name="Glasser K."/>
            <person name="Glodek A."/>
            <person name="Gong F."/>
            <person name="Gorrell J.H."/>
            <person name="Gu Z."/>
            <person name="Guan P."/>
            <person name="Harris M."/>
            <person name="Harris N.L."/>
            <person name="Harvey D.A."/>
            <person name="Heiman T.J."/>
            <person name="Hernandez J.R."/>
            <person name="Houck J."/>
            <person name="Hostin D."/>
            <person name="Houston K.A."/>
            <person name="Howland T.J."/>
            <person name="Wei M.-H."/>
            <person name="Ibegwam C."/>
            <person name="Jalali M."/>
            <person name="Kalush F."/>
            <person name="Karpen G.H."/>
            <person name="Ke Z."/>
            <person name="Kennison J.A."/>
            <person name="Ketchum K.A."/>
            <person name="Kimmel B.E."/>
            <person name="Kodira C.D."/>
            <person name="Kraft C.L."/>
            <person name="Kravitz S."/>
            <person name="Kulp D."/>
            <person name="Lai Z."/>
            <person name="Lasko P."/>
            <person name="Lei Y."/>
            <person name="Levitsky A.A."/>
            <person name="Li J.H."/>
            <person name="Li Z."/>
            <person name="Liang Y."/>
            <person name="Lin X."/>
            <person name="Liu X."/>
            <person name="Mattei B."/>
            <person name="McIntosh T.C."/>
            <person name="McLeod M.P."/>
            <person name="McPherson D."/>
            <person name="Merkulov G."/>
            <person name="Milshina N.V."/>
            <person name="Mobarry C."/>
            <person name="Morris J."/>
            <person name="Moshrefi A."/>
            <person name="Mount S.M."/>
            <person name="Moy M."/>
            <person name="Murphy B."/>
            <person name="Murphy L."/>
            <person name="Muzny D.M."/>
            <person name="Nelson D.L."/>
            <person name="Nelson D.R."/>
            <person name="Nelson K.A."/>
            <person name="Nixon K."/>
            <person name="Nusskern D.R."/>
            <person name="Pacleb J.M."/>
            <person name="Palazzolo M."/>
            <person name="Pittman G.S."/>
            <person name="Pan S."/>
            <person name="Pollard J."/>
            <person name="Puri V."/>
            <person name="Reese M.G."/>
            <person name="Reinert K."/>
            <person name="Remington K."/>
            <person name="Saunders R.D.C."/>
            <person name="Scheeler F."/>
            <person name="Shen H."/>
            <person name="Shue B.C."/>
            <person name="Siden-Kiamos I."/>
            <person name="Simpson M."/>
            <person name="Skupski M.P."/>
            <person name="Smith T.J."/>
            <person name="Spier E."/>
            <person name="Spradling A.C."/>
            <person name="Stapleton M."/>
            <person name="Strong R."/>
            <person name="Sun E."/>
            <person name="Svirskas R."/>
            <person name="Tector C."/>
            <person name="Turner R."/>
            <person name="Venter E."/>
            <person name="Wang A.H."/>
            <person name="Wang X."/>
            <person name="Wang Z.-Y."/>
            <person name="Wassarman D.A."/>
            <person name="Weinstock G.M."/>
            <person name="Weissenbach J."/>
            <person name="Williams S.M."/>
            <person name="Woodage T."/>
            <person name="Worley K.C."/>
            <person name="Wu D."/>
            <person name="Yang S."/>
            <person name="Yao Q.A."/>
            <person name="Ye J."/>
            <person name="Yeh R.-F."/>
            <person name="Zaveri J.S."/>
            <person name="Zhan M."/>
            <person name="Zhang G."/>
            <person name="Zhao Q."/>
            <person name="Zheng L."/>
            <person name="Zheng X.H."/>
            <person name="Zhong F.N."/>
            <person name="Zhong W."/>
            <person name="Zhou X."/>
            <person name="Zhu S.C."/>
            <person name="Zhu X."/>
            <person name="Smith H.O."/>
            <person name="Gibbs R.A."/>
            <person name="Myers E.W."/>
            <person name="Rubin G.M."/>
            <person name="Venter J.C."/>
        </authorList>
    </citation>
    <scope>NUCLEOTIDE SEQUENCE [LARGE SCALE GENOMIC DNA]</scope>
    <source>
        <strain>Berkeley</strain>
    </source>
</reference>
<reference key="2">
    <citation type="journal article" date="2002" name="Genome Biol.">
        <title>Annotation of the Drosophila melanogaster euchromatic genome: a systematic review.</title>
        <authorList>
            <person name="Misra S."/>
            <person name="Crosby M.A."/>
            <person name="Mungall C.J."/>
            <person name="Matthews B.B."/>
            <person name="Campbell K.S."/>
            <person name="Hradecky P."/>
            <person name="Huang Y."/>
            <person name="Kaminker J.S."/>
            <person name="Millburn G.H."/>
            <person name="Prochnik S.E."/>
            <person name="Smith C.D."/>
            <person name="Tupy J.L."/>
            <person name="Whitfield E.J."/>
            <person name="Bayraktaroglu L."/>
            <person name="Berman B.P."/>
            <person name="Bettencourt B.R."/>
            <person name="Celniker S.E."/>
            <person name="de Grey A.D.N.J."/>
            <person name="Drysdale R.A."/>
            <person name="Harris N.L."/>
            <person name="Richter J."/>
            <person name="Russo S."/>
            <person name="Schroeder A.J."/>
            <person name="Shu S.Q."/>
            <person name="Stapleton M."/>
            <person name="Yamada C."/>
            <person name="Ashburner M."/>
            <person name="Gelbart W.M."/>
            <person name="Rubin G.M."/>
            <person name="Lewis S.E."/>
        </authorList>
    </citation>
    <scope>GENOME REANNOTATION</scope>
    <source>
        <strain>Berkeley</strain>
    </source>
</reference>
<reference key="3">
    <citation type="submission" date="2003-02" db="EMBL/GenBank/DDBJ databases">
        <authorList>
            <person name="Stapleton M."/>
            <person name="Brokstein P."/>
            <person name="Hong L."/>
            <person name="Agbayani A."/>
            <person name="Carlson J.W."/>
            <person name="Champe M."/>
            <person name="Chavez C."/>
            <person name="Dorsett V."/>
            <person name="Dresnek D."/>
            <person name="Farfan D."/>
            <person name="Frise E."/>
            <person name="George R.A."/>
            <person name="Gonzalez M."/>
            <person name="Guarin H."/>
            <person name="Kronmiller B."/>
            <person name="Li P.W."/>
            <person name="Liao G."/>
            <person name="Miranda A."/>
            <person name="Mungall C.J."/>
            <person name="Nunoo J."/>
            <person name="Pacleb J.M."/>
            <person name="Paragas V."/>
            <person name="Park S."/>
            <person name="Patel S."/>
            <person name="Phouanenavong S."/>
            <person name="Wan K.H."/>
            <person name="Yu C."/>
            <person name="Lewis S.E."/>
            <person name="Rubin G.M."/>
            <person name="Celniker S.E."/>
        </authorList>
    </citation>
    <scope>NUCLEOTIDE SEQUENCE [LARGE SCALE MRNA]</scope>
    <source>
        <strain>Berkeley</strain>
        <tissue>Embryo</tissue>
    </source>
</reference>
<reference key="4">
    <citation type="journal article" date="2006" name="Dev. Biol.">
        <title>Deadlock, a novel protein of Drosophila, is required for germline maintenance, fusome morphogenesis and axial patterning in oogenesis and associates with centrosomes in the early embryo.</title>
        <authorList>
            <person name="Wehr K."/>
            <person name="Swan A."/>
            <person name="Schupbach T."/>
        </authorList>
    </citation>
    <scope>FUNCTION</scope>
    <scope>SUBCELLULAR LOCATION</scope>
</reference>
<reference key="5">
    <citation type="journal article" date="2014" name="Cell">
        <title>The rhino-deadlock-cutoff complex licenses noncanonical transcription of dual-strand piRNA clusters in Drosophila.</title>
        <authorList>
            <person name="Mohn F."/>
            <person name="Sienski G."/>
            <person name="Handler D."/>
            <person name="Brennecke J."/>
        </authorList>
    </citation>
    <scope>IDENTIFICATION IN THE RDC COMPLEX</scope>
    <scope>INTERACTION WITH RHI AND CUFF</scope>
    <scope>SUBCELLULAR LOCATION</scope>
</reference>
<reference key="6">
    <citation type="journal article" date="2016" name="Mol. Cell">
        <title>Cutoff Suppresses RNA Polymerase II Termination to Ensure Expression of piRNA Precursors.</title>
        <authorList>
            <person name="Chen Y.A."/>
            <person name="Stuwe E."/>
            <person name="Luo Y."/>
            <person name="Ninova M."/>
            <person name="Le Thomas A."/>
            <person name="Rozhavskaya E."/>
            <person name="Li S."/>
            <person name="Vempati S."/>
            <person name="Laver J.D."/>
            <person name="Patel D.J."/>
            <person name="Smibert C.A."/>
            <person name="Lipshitz H.D."/>
            <person name="Toth K.F."/>
            <person name="Aravin A.A."/>
        </authorList>
    </citation>
    <scope>FUNCTION</scope>
</reference>
<reference key="7">
    <citation type="journal article" date="2017" name="Nature">
        <title>A heterochromatin-dependent transcription machinery drives piRNA expression.</title>
        <authorList>
            <person name="Andersen P.R."/>
            <person name="Tirian L."/>
            <person name="Vunjak M."/>
            <person name="Brennecke J."/>
        </authorList>
    </citation>
    <scope>FUNCTION</scope>
    <scope>SUBCELLULAR LOCATION</scope>
</reference>
<reference evidence="8" key="8">
    <citation type="journal article" date="2018" name="EMBO Rep.">
        <title>Structural insights into Rhino-Deadlock complex for germline piRNA cluster specification.</title>
        <authorList>
            <person name="Yu B."/>
            <person name="Lin Y.A."/>
            <person name="Parhad S.S."/>
            <person name="Jin Z."/>
            <person name="Ma J."/>
            <person name="Theurkauf W.E."/>
            <person name="Zhang Z.Z."/>
            <person name="Huang Y."/>
        </authorList>
    </citation>
    <scope>X-RAY CRYSTALLOGRAPHY (2.10 ANGSTROMS) OF 1-60 IN COMPLEX WITH RHI</scope>
    <scope>INTERACTION WITH RHI</scope>
</reference>
<organism>
    <name type="scientific">Drosophila melanogaster</name>
    <name type="common">Fruit fly</name>
    <dbReference type="NCBI Taxonomy" id="7227"/>
    <lineage>
        <taxon>Eukaryota</taxon>
        <taxon>Metazoa</taxon>
        <taxon>Ecdysozoa</taxon>
        <taxon>Arthropoda</taxon>
        <taxon>Hexapoda</taxon>
        <taxon>Insecta</taxon>
        <taxon>Pterygota</taxon>
        <taxon>Neoptera</taxon>
        <taxon>Endopterygota</taxon>
        <taxon>Diptera</taxon>
        <taxon>Brachycera</taxon>
        <taxon>Muscomorpha</taxon>
        <taxon>Ephydroidea</taxon>
        <taxon>Drosophilidae</taxon>
        <taxon>Drosophila</taxon>
        <taxon>Sophophora</taxon>
    </lineage>
</organism>
<sequence length="981" mass="110817">MEKLDKIRMSQKLSCWQHILTTLGTSSKTEQEWNTFFKGFLESWRKPYCIQTSCDPSIPLRKELLVRPRKALQENPHGPGSTLPESPVFLEPINSTAPREHPSPSKSHSTGSTGCDPGNGERSPSVSNKNSKYKNPGNSKYAKIWKRSNNHTTSIFSKAQISKRRDKLSSTKKRPDTCAPTDDSRKNREPRACAPNKNIFKTRETNAPNLTKNSCALPNVLILSPNSASKITQRGHSVGQTQDYKASPGKIIKRVPRYSLQCLKKKTEKVHNKIMDKPKNKQQPQTPPPFLLNNEYTESSDDSDDQLPLSELSQKMKSNKLNTLFLSRNEDCSPAPEKVKLKGERPAQNKKEQLTWEPSILTNLTDLGKQVAEPLRKSVKKSAKQQKPRVRAPPQGKKTLPQLQTGLKTQDKQSTHEMISEQAKTISEASGQQTSQVQSSLSPNNIRNNSVKLISAKTLMPAQRSQDYSPNKMQVGQPLGFAIELPSPVDGKEASVEIDTQLVHTSKFLENMTRPSTVEVHKFDLMDIFMGENEKLDYEYDDDDVLSVAASWNGLDDENVPEDEPRKEAKTAEQLPKPEPSTETLKPIEKENAQKMQSIKSFQIPKLNAKNLKTQPSVMRSIYENEELEKNKVLAKPAPPSLVHQPLAESNRNQRDEATAARRAKETFPVFAPLYRVAPESAATLVSANSQQVIPQVYFSTSNQDGVNWIKDVFGIRCMQSVDNKCISINCDHTMNSLGEVQKRLMRMDEDTLLSLYRQTIRSFFLFQTYYTSFVDIFKFRNLWQYLLIMLVDCRLYKSISAPLLAHVYEALSKCGMQKEAVKRIMEHVWLPCKAHKYRDLMLTTLNILSNANWEDYCDKLTQLDKDYNFEIPHKNLITILKSSVDCSDKFANALKLITLHPNSIRTNETIMSILSNASKSYSYMHNESASASQGPPGAASFLAPPAAIQPPHTTVPNFGYLPNPSFHYSNEYAINIHNFD</sequence>
<feature type="chain" id="PRO_0000235296" description="Protein deadlock">
    <location>
        <begin position="1"/>
        <end position="981"/>
    </location>
</feature>
<feature type="region of interest" description="Required for interaction with rhi/rhino" evidence="6">
    <location>
        <begin position="1"/>
        <end position="60"/>
    </location>
</feature>
<feature type="region of interest" description="Disordered" evidence="1">
    <location>
        <begin position="72"/>
        <end position="195"/>
    </location>
</feature>
<feature type="region of interest" description="Disordered" evidence="1">
    <location>
        <begin position="274"/>
        <end position="307"/>
    </location>
</feature>
<feature type="region of interest" description="Disordered" evidence="1">
    <location>
        <begin position="327"/>
        <end position="352"/>
    </location>
</feature>
<feature type="region of interest" description="Disordered" evidence="1">
    <location>
        <begin position="375"/>
        <end position="446"/>
    </location>
</feature>
<feature type="region of interest" description="Disordered" evidence="1">
    <location>
        <begin position="554"/>
        <end position="586"/>
    </location>
</feature>
<feature type="region of interest" description="Disordered" evidence="1">
    <location>
        <begin position="642"/>
        <end position="662"/>
    </location>
</feature>
<feature type="compositionally biased region" description="Polar residues" evidence="1">
    <location>
        <begin position="104"/>
        <end position="113"/>
    </location>
</feature>
<feature type="compositionally biased region" description="Polar residues" evidence="1">
    <location>
        <begin position="150"/>
        <end position="160"/>
    </location>
</feature>
<feature type="compositionally biased region" description="Basic and acidic residues" evidence="1">
    <location>
        <begin position="167"/>
        <end position="191"/>
    </location>
</feature>
<feature type="compositionally biased region" description="Basic and acidic residues" evidence="1">
    <location>
        <begin position="337"/>
        <end position="352"/>
    </location>
</feature>
<feature type="compositionally biased region" description="Basic residues" evidence="1">
    <location>
        <begin position="377"/>
        <end position="390"/>
    </location>
</feature>
<feature type="compositionally biased region" description="Basic and acidic residues" evidence="1">
    <location>
        <begin position="409"/>
        <end position="419"/>
    </location>
</feature>
<feature type="compositionally biased region" description="Polar residues" evidence="1">
    <location>
        <begin position="422"/>
        <end position="446"/>
    </location>
</feature>
<feature type="compositionally biased region" description="Basic and acidic residues" evidence="1">
    <location>
        <begin position="652"/>
        <end position="662"/>
    </location>
</feature>
<feature type="helix" evidence="9">
    <location>
        <begin position="4"/>
        <end position="6"/>
    </location>
</feature>
<feature type="helix" evidence="9">
    <location>
        <begin position="9"/>
        <end position="23"/>
    </location>
</feature>
<feature type="helix" evidence="9">
    <location>
        <begin position="25"/>
        <end position="27"/>
    </location>
</feature>
<feature type="helix" evidence="9">
    <location>
        <begin position="30"/>
        <end position="45"/>
    </location>
</feature>
<feature type="strand" evidence="9">
    <location>
        <begin position="49"/>
        <end position="51"/>
    </location>
</feature>
<evidence type="ECO:0000256" key="1">
    <source>
        <dbReference type="SAM" id="MobiDB-lite"/>
    </source>
</evidence>
<evidence type="ECO:0000269" key="2">
    <source>
    </source>
</evidence>
<evidence type="ECO:0000269" key="3">
    <source>
    </source>
</evidence>
<evidence type="ECO:0000269" key="4">
    <source>
    </source>
</evidence>
<evidence type="ECO:0000269" key="5">
    <source>
    </source>
</evidence>
<evidence type="ECO:0000269" key="6">
    <source>
    </source>
</evidence>
<evidence type="ECO:0000305" key="7"/>
<evidence type="ECO:0007744" key="8">
    <source>
        <dbReference type="PDB" id="5XYV"/>
    </source>
</evidence>
<evidence type="ECO:0007829" key="9">
    <source>
        <dbReference type="PDB" id="5XYV"/>
    </source>
</evidence>
<gene>
    <name type="primary">del</name>
    <name type="ORF">CG9252</name>
</gene>
<accession>Q9VIF5</accession>
<accession>Q86P81</accession>
<protein>
    <recommendedName>
        <fullName>Protein deadlock</fullName>
    </recommendedName>
</protein>
<name>DEL_DROME</name>
<dbReference type="EMBL" id="AE014134">
    <property type="protein sequence ID" value="AAF53964.2"/>
    <property type="molecule type" value="Genomic_DNA"/>
</dbReference>
<dbReference type="EMBL" id="BT003434">
    <property type="protein sequence ID" value="AAO39437.1"/>
    <property type="status" value="ALT_INIT"/>
    <property type="molecule type" value="mRNA"/>
</dbReference>
<dbReference type="RefSeq" id="NP_001260666.1">
    <property type="nucleotide sequence ID" value="NM_001273737.1"/>
</dbReference>
<dbReference type="RefSeq" id="NP_610091.2">
    <property type="nucleotide sequence ID" value="NM_136247.3"/>
</dbReference>
<dbReference type="PDB" id="5XYV">
    <property type="method" value="X-ray"/>
    <property type="resolution" value="2.10 A"/>
    <property type="chains" value="C/D=1-60"/>
</dbReference>
<dbReference type="PDBsum" id="5XYV"/>
<dbReference type="SMR" id="Q9VIF5"/>
<dbReference type="BioGRID" id="61335">
    <property type="interactions" value="8"/>
</dbReference>
<dbReference type="ComplexPortal" id="CPX-3213">
    <property type="entry name" value="Rhino-Deadlock-Cutoff complex"/>
</dbReference>
<dbReference type="FunCoup" id="Q9VIF5">
    <property type="interactions" value="18"/>
</dbReference>
<dbReference type="IntAct" id="Q9VIF5">
    <property type="interactions" value="6"/>
</dbReference>
<dbReference type="STRING" id="7227.FBpp0305298"/>
<dbReference type="PaxDb" id="7227-FBpp0305298"/>
<dbReference type="DNASU" id="35380"/>
<dbReference type="EnsemblMetazoa" id="FBtr0081502">
    <property type="protein sequence ID" value="FBpp0081030"/>
    <property type="gene ID" value="FBgn0086251"/>
</dbReference>
<dbReference type="EnsemblMetazoa" id="FBtr0333085">
    <property type="protein sequence ID" value="FBpp0305298"/>
    <property type="gene ID" value="FBgn0086251"/>
</dbReference>
<dbReference type="GeneID" id="35380"/>
<dbReference type="KEGG" id="dme:Dmel_CG9252"/>
<dbReference type="UCSC" id="CG9252-RA">
    <property type="organism name" value="d. melanogaster"/>
</dbReference>
<dbReference type="AGR" id="FB:FBgn0086251"/>
<dbReference type="CTD" id="35380"/>
<dbReference type="FlyBase" id="FBgn0086251">
    <property type="gene designation" value="del"/>
</dbReference>
<dbReference type="VEuPathDB" id="VectorBase:FBgn0086251"/>
<dbReference type="eggNOG" id="ENOG502T86W">
    <property type="taxonomic scope" value="Eukaryota"/>
</dbReference>
<dbReference type="InParanoid" id="Q9VIF5"/>
<dbReference type="OMA" id="CTNETIM"/>
<dbReference type="OrthoDB" id="7869957at2759"/>
<dbReference type="PhylomeDB" id="Q9VIF5"/>
<dbReference type="SignaLink" id="Q9VIF5"/>
<dbReference type="BioGRID-ORCS" id="35380">
    <property type="hits" value="0 hits in 1 CRISPR screen"/>
</dbReference>
<dbReference type="CD-CODE" id="2838EF58">
    <property type="entry name" value="Centrosome"/>
</dbReference>
<dbReference type="GenomeRNAi" id="35380"/>
<dbReference type="PRO" id="PR:Q9VIF5"/>
<dbReference type="Proteomes" id="UP000000803">
    <property type="component" value="Chromosome 2L"/>
</dbReference>
<dbReference type="Bgee" id="FBgn0086251">
    <property type="expression patterns" value="Expressed in oocyte and 71 other cell types or tissues"/>
</dbReference>
<dbReference type="ExpressionAtlas" id="Q9VIF5">
    <property type="expression patterns" value="baseline and differential"/>
</dbReference>
<dbReference type="GO" id="GO:0005813">
    <property type="term" value="C:centrosome"/>
    <property type="evidence" value="ECO:0000314"/>
    <property type="project" value="UniProtKB"/>
</dbReference>
<dbReference type="GO" id="GO:0005737">
    <property type="term" value="C:cytoplasm"/>
    <property type="evidence" value="ECO:0007669"/>
    <property type="project" value="UniProtKB-KW"/>
</dbReference>
<dbReference type="GO" id="GO:0000792">
    <property type="term" value="C:heterochromatin"/>
    <property type="evidence" value="ECO:0000314"/>
    <property type="project" value="FlyBase"/>
</dbReference>
<dbReference type="GO" id="GO:0005634">
    <property type="term" value="C:nucleus"/>
    <property type="evidence" value="ECO:0000314"/>
    <property type="project" value="UniProtKB"/>
</dbReference>
<dbReference type="GO" id="GO:1990469">
    <property type="term" value="C:Rhino-Deadlock-Cutoff Complex"/>
    <property type="evidence" value="ECO:0000303"/>
    <property type="project" value="ComplexPortal"/>
</dbReference>
<dbReference type="GO" id="GO:0045478">
    <property type="term" value="P:fusome organization"/>
    <property type="evidence" value="ECO:0000315"/>
    <property type="project" value="UniProtKB"/>
</dbReference>
<dbReference type="GO" id="GO:0007293">
    <property type="term" value="P:germarium-derived egg chamber formation"/>
    <property type="evidence" value="ECO:0000315"/>
    <property type="project" value="FlyBase"/>
</dbReference>
<dbReference type="GO" id="GO:0007052">
    <property type="term" value="P:mitotic spindle organization"/>
    <property type="evidence" value="ECO:0000315"/>
    <property type="project" value="UniProtKB"/>
</dbReference>
<dbReference type="GO" id="GO:0048599">
    <property type="term" value="P:oocyte development"/>
    <property type="evidence" value="ECO:0000315"/>
    <property type="project" value="UniProtKB"/>
</dbReference>
<dbReference type="GO" id="GO:0030717">
    <property type="term" value="P:oocyte karyosome formation"/>
    <property type="evidence" value="ECO:0000315"/>
    <property type="project" value="FlyBase"/>
</dbReference>
<dbReference type="GO" id="GO:0030720">
    <property type="term" value="P:oocyte localization involved in germarium-derived egg chamber formation"/>
    <property type="evidence" value="ECO:0000315"/>
    <property type="project" value="FlyBase"/>
</dbReference>
<dbReference type="GO" id="GO:0048477">
    <property type="term" value="P:oogenesis"/>
    <property type="evidence" value="ECO:0000315"/>
    <property type="project" value="UniProtKB"/>
</dbReference>
<dbReference type="GO" id="GO:0034587">
    <property type="term" value="P:piRNA processing"/>
    <property type="evidence" value="ECO:0000303"/>
    <property type="project" value="ComplexPortal"/>
</dbReference>
<dbReference type="GO" id="GO:0140543">
    <property type="term" value="P:positive regulation of piRNA transcription"/>
    <property type="evidence" value="ECO:0000315"/>
    <property type="project" value="FlyBase"/>
</dbReference>
<keyword id="KW-0002">3D-structure</keyword>
<keyword id="KW-0158">Chromosome</keyword>
<keyword id="KW-0963">Cytoplasm</keyword>
<keyword id="KW-0206">Cytoskeleton</keyword>
<keyword id="KW-0217">Developmental protein</keyword>
<keyword id="KW-0221">Differentiation</keyword>
<keyword id="KW-0539">Nucleus</keyword>
<keyword id="KW-0896">Oogenesis</keyword>
<keyword id="KW-1185">Reference proteome</keyword>
<keyword id="KW-0804">Transcription</keyword>
<keyword id="KW-0805">Transcription regulation</keyword>